<sequence>MSVSAAVAAASTSRTLVLARHRSPPASRVAATSRGRPFSSGPHPLAVSPATRAPAMATDGAAAAAAAGSKKKKEVLIFDAEEDLAVSLAKYTAELSAKLAAERGAFTVVLSGGSLIKNIRKLAEPPYLDSVDWSKWHVFWVDERVVPKDHEDSNYKLALDGFLSKVPIPTGQVYAINDALSAEGAADDYETCLKQLVKNGVIAMSQSTGFPRFDVMLLGMGPDGHIASLFPGHPLVNENKKWVTYIKDSPKPPPERITFTFPVINSSAYVAMVVTGAGKAGAVQKALSDKQTSSDLLPVEMAVLQDGEFTWFTDKPAVSMLQNK</sequence>
<proteinExistence type="evidence at transcript level"/>
<reference key="1">
    <citation type="journal article" date="2005" name="Nature">
        <title>The map-based sequence of the rice genome.</title>
        <authorList>
            <consortium name="International rice genome sequencing project (IRGSP)"/>
        </authorList>
    </citation>
    <scope>NUCLEOTIDE SEQUENCE [LARGE SCALE GENOMIC DNA]</scope>
    <source>
        <strain>cv. Nipponbare</strain>
    </source>
</reference>
<reference key="2">
    <citation type="journal article" date="2008" name="Nucleic Acids Res.">
        <title>The rice annotation project database (RAP-DB): 2008 update.</title>
        <authorList>
            <consortium name="The rice annotation project (RAP)"/>
        </authorList>
    </citation>
    <scope>GENOME REANNOTATION</scope>
    <source>
        <strain>cv. Nipponbare</strain>
    </source>
</reference>
<reference key="3">
    <citation type="journal article" date="2013" name="Rice">
        <title>Improvement of the Oryza sativa Nipponbare reference genome using next generation sequence and optical map data.</title>
        <authorList>
            <person name="Kawahara Y."/>
            <person name="de la Bastide M."/>
            <person name="Hamilton J.P."/>
            <person name="Kanamori H."/>
            <person name="McCombie W.R."/>
            <person name="Ouyang S."/>
            <person name="Schwartz D.C."/>
            <person name="Tanaka T."/>
            <person name="Wu J."/>
            <person name="Zhou S."/>
            <person name="Childs K.L."/>
            <person name="Davidson R.M."/>
            <person name="Lin H."/>
            <person name="Quesada-Ocampo L."/>
            <person name="Vaillancourt B."/>
            <person name="Sakai H."/>
            <person name="Lee S.S."/>
            <person name="Kim J."/>
            <person name="Numa H."/>
            <person name="Itoh T."/>
            <person name="Buell C.R."/>
            <person name="Matsumoto T."/>
        </authorList>
    </citation>
    <scope>GENOME REANNOTATION</scope>
    <source>
        <strain>cv. Nipponbare</strain>
    </source>
</reference>
<reference key="4">
    <citation type="journal article" date="2005" name="PLoS Biol.">
        <title>The genomes of Oryza sativa: a history of duplications.</title>
        <authorList>
            <person name="Yu J."/>
            <person name="Wang J."/>
            <person name="Lin W."/>
            <person name="Li S."/>
            <person name="Li H."/>
            <person name="Zhou J."/>
            <person name="Ni P."/>
            <person name="Dong W."/>
            <person name="Hu S."/>
            <person name="Zeng C."/>
            <person name="Zhang J."/>
            <person name="Zhang Y."/>
            <person name="Li R."/>
            <person name="Xu Z."/>
            <person name="Li S."/>
            <person name="Li X."/>
            <person name="Zheng H."/>
            <person name="Cong L."/>
            <person name="Lin L."/>
            <person name="Yin J."/>
            <person name="Geng J."/>
            <person name="Li G."/>
            <person name="Shi J."/>
            <person name="Liu J."/>
            <person name="Lv H."/>
            <person name="Li J."/>
            <person name="Wang J."/>
            <person name="Deng Y."/>
            <person name="Ran L."/>
            <person name="Shi X."/>
            <person name="Wang X."/>
            <person name="Wu Q."/>
            <person name="Li C."/>
            <person name="Ren X."/>
            <person name="Wang J."/>
            <person name="Wang X."/>
            <person name="Li D."/>
            <person name="Liu D."/>
            <person name="Zhang X."/>
            <person name="Ji Z."/>
            <person name="Zhao W."/>
            <person name="Sun Y."/>
            <person name="Zhang Z."/>
            <person name="Bao J."/>
            <person name="Han Y."/>
            <person name="Dong L."/>
            <person name="Ji J."/>
            <person name="Chen P."/>
            <person name="Wu S."/>
            <person name="Liu J."/>
            <person name="Xiao Y."/>
            <person name="Bu D."/>
            <person name="Tan J."/>
            <person name="Yang L."/>
            <person name="Ye C."/>
            <person name="Zhang J."/>
            <person name="Xu J."/>
            <person name="Zhou Y."/>
            <person name="Yu Y."/>
            <person name="Zhang B."/>
            <person name="Zhuang S."/>
            <person name="Wei H."/>
            <person name="Liu B."/>
            <person name="Lei M."/>
            <person name="Yu H."/>
            <person name="Li Y."/>
            <person name="Xu H."/>
            <person name="Wei S."/>
            <person name="He X."/>
            <person name="Fang L."/>
            <person name="Zhang Z."/>
            <person name="Zhang Y."/>
            <person name="Huang X."/>
            <person name="Su Z."/>
            <person name="Tong W."/>
            <person name="Li J."/>
            <person name="Tong Z."/>
            <person name="Li S."/>
            <person name="Ye J."/>
            <person name="Wang L."/>
            <person name="Fang L."/>
            <person name="Lei T."/>
            <person name="Chen C.-S."/>
            <person name="Chen H.-C."/>
            <person name="Xu Z."/>
            <person name="Li H."/>
            <person name="Huang H."/>
            <person name="Zhang F."/>
            <person name="Xu H."/>
            <person name="Li N."/>
            <person name="Zhao C."/>
            <person name="Li S."/>
            <person name="Dong L."/>
            <person name="Huang Y."/>
            <person name="Li L."/>
            <person name="Xi Y."/>
            <person name="Qi Q."/>
            <person name="Li W."/>
            <person name="Zhang B."/>
            <person name="Hu W."/>
            <person name="Zhang Y."/>
            <person name="Tian X."/>
            <person name="Jiao Y."/>
            <person name="Liang X."/>
            <person name="Jin J."/>
            <person name="Gao L."/>
            <person name="Zheng W."/>
            <person name="Hao B."/>
            <person name="Liu S.-M."/>
            <person name="Wang W."/>
            <person name="Yuan L."/>
            <person name="Cao M."/>
            <person name="McDermott J."/>
            <person name="Samudrala R."/>
            <person name="Wang J."/>
            <person name="Wong G.K.-S."/>
            <person name="Yang H."/>
        </authorList>
    </citation>
    <scope>NUCLEOTIDE SEQUENCE [LARGE SCALE GENOMIC DNA]</scope>
    <source>
        <strain>cv. Nipponbare</strain>
    </source>
</reference>
<reference key="5">
    <citation type="journal article" date="2003" name="Science">
        <title>Collection, mapping, and annotation of over 28,000 cDNA clones from japonica rice.</title>
        <authorList>
            <consortium name="The rice full-length cDNA consortium"/>
        </authorList>
    </citation>
    <scope>NUCLEOTIDE SEQUENCE [LARGE SCALE MRNA] OF 3-324</scope>
    <source>
        <strain>cv. Nipponbare</strain>
    </source>
</reference>
<organism>
    <name type="scientific">Oryza sativa subsp. japonica</name>
    <name type="common">Rice</name>
    <dbReference type="NCBI Taxonomy" id="39947"/>
    <lineage>
        <taxon>Eukaryota</taxon>
        <taxon>Viridiplantae</taxon>
        <taxon>Streptophyta</taxon>
        <taxon>Embryophyta</taxon>
        <taxon>Tracheophyta</taxon>
        <taxon>Spermatophyta</taxon>
        <taxon>Magnoliopsida</taxon>
        <taxon>Liliopsida</taxon>
        <taxon>Poales</taxon>
        <taxon>Poaceae</taxon>
        <taxon>BOP clade</taxon>
        <taxon>Oryzoideae</taxon>
        <taxon>Oryzeae</taxon>
        <taxon>Oryzinae</taxon>
        <taxon>Oryza</taxon>
        <taxon>Oryza sativa</taxon>
    </lineage>
</organism>
<keyword id="KW-0150">Chloroplast</keyword>
<keyword id="KW-0378">Hydrolase</keyword>
<keyword id="KW-0934">Plastid</keyword>
<keyword id="KW-1185">Reference proteome</keyword>
<keyword id="KW-0809">Transit peptide</keyword>
<gene>
    <name type="ordered locus">Os09g0529100</name>
    <name type="ordered locus">LOC_Os09g35970</name>
    <name type="ORF">OJ1531_B07.11</name>
    <name type="ORF">OsJ_028924</name>
</gene>
<name>6PGL4_ORYSJ</name>
<dbReference type="EC" id="3.1.1.31"/>
<dbReference type="EMBL" id="AP005682">
    <property type="protein sequence ID" value="BAD33762.1"/>
    <property type="status" value="ALT_INIT"/>
    <property type="molecule type" value="Genomic_DNA"/>
</dbReference>
<dbReference type="EMBL" id="AP008215">
    <property type="protein sequence ID" value="BAF25655.1"/>
    <property type="status" value="ALT_INIT"/>
    <property type="molecule type" value="Genomic_DNA"/>
</dbReference>
<dbReference type="EMBL" id="AP014965">
    <property type="status" value="NOT_ANNOTATED_CDS"/>
    <property type="molecule type" value="Genomic_DNA"/>
</dbReference>
<dbReference type="EMBL" id="CM000146">
    <property type="status" value="NOT_ANNOTATED_CDS"/>
    <property type="molecule type" value="Genomic_DNA"/>
</dbReference>
<dbReference type="EMBL" id="AK069696">
    <property type="status" value="NOT_ANNOTATED_CDS"/>
    <property type="molecule type" value="mRNA"/>
</dbReference>
<dbReference type="RefSeq" id="XP_015612582.1">
    <property type="nucleotide sequence ID" value="XM_015757096.1"/>
</dbReference>
<dbReference type="SMR" id="Q69NG5"/>
<dbReference type="FunCoup" id="Q69NG5">
    <property type="interactions" value="2735"/>
</dbReference>
<dbReference type="STRING" id="39947.Q69NG5"/>
<dbReference type="PaxDb" id="39947-Q69NG5"/>
<dbReference type="KEGG" id="dosa:Os09g0529100"/>
<dbReference type="eggNOG" id="KOG3147">
    <property type="taxonomic scope" value="Eukaryota"/>
</dbReference>
<dbReference type="InParanoid" id="Q69NG5"/>
<dbReference type="OrthoDB" id="432544at2759"/>
<dbReference type="UniPathway" id="UPA00115">
    <property type="reaction ID" value="UER00409"/>
</dbReference>
<dbReference type="Proteomes" id="UP000000763">
    <property type="component" value="Chromosome 9"/>
</dbReference>
<dbReference type="Proteomes" id="UP000007752">
    <property type="component" value="Chromosome 9"/>
</dbReference>
<dbReference type="Proteomes" id="UP000059680">
    <property type="component" value="Chromosome 9"/>
</dbReference>
<dbReference type="GO" id="GO:0009507">
    <property type="term" value="C:chloroplast"/>
    <property type="evidence" value="ECO:0007669"/>
    <property type="project" value="UniProtKB-SubCell"/>
</dbReference>
<dbReference type="GO" id="GO:0005829">
    <property type="term" value="C:cytosol"/>
    <property type="evidence" value="ECO:0000318"/>
    <property type="project" value="GO_Central"/>
</dbReference>
<dbReference type="GO" id="GO:0017057">
    <property type="term" value="F:6-phosphogluconolactonase activity"/>
    <property type="evidence" value="ECO:0000318"/>
    <property type="project" value="GO_Central"/>
</dbReference>
<dbReference type="GO" id="GO:0005975">
    <property type="term" value="P:carbohydrate metabolic process"/>
    <property type="evidence" value="ECO:0007669"/>
    <property type="project" value="InterPro"/>
</dbReference>
<dbReference type="GO" id="GO:0009051">
    <property type="term" value="P:pentose-phosphate shunt, oxidative branch"/>
    <property type="evidence" value="ECO:0000318"/>
    <property type="project" value="GO_Central"/>
</dbReference>
<dbReference type="CDD" id="cd01400">
    <property type="entry name" value="6PGL"/>
    <property type="match status" value="1"/>
</dbReference>
<dbReference type="FunFam" id="3.40.50.1360:FF:000009">
    <property type="entry name" value="Probable 6-phosphogluconolactonase"/>
    <property type="match status" value="1"/>
</dbReference>
<dbReference type="Gene3D" id="3.40.50.1360">
    <property type="match status" value="1"/>
</dbReference>
<dbReference type="InterPro" id="IPR005900">
    <property type="entry name" value="6-phosphogluconolactonase_DevB"/>
</dbReference>
<dbReference type="InterPro" id="IPR006148">
    <property type="entry name" value="Glc/Gal-6P_isomerase"/>
</dbReference>
<dbReference type="InterPro" id="IPR037171">
    <property type="entry name" value="NagB/RpiA_transferase-like"/>
</dbReference>
<dbReference type="InterPro" id="IPR039104">
    <property type="entry name" value="PGLS"/>
</dbReference>
<dbReference type="NCBIfam" id="TIGR01198">
    <property type="entry name" value="pgl"/>
    <property type="match status" value="1"/>
</dbReference>
<dbReference type="PANTHER" id="PTHR11054">
    <property type="entry name" value="6-PHOSPHOGLUCONOLACTONASE"/>
    <property type="match status" value="1"/>
</dbReference>
<dbReference type="PANTHER" id="PTHR11054:SF22">
    <property type="entry name" value="6-PHOSPHOGLUCONOLACTONASE 3, CHLOROPLASTIC"/>
    <property type="match status" value="1"/>
</dbReference>
<dbReference type="Pfam" id="PF01182">
    <property type="entry name" value="Glucosamine_iso"/>
    <property type="match status" value="1"/>
</dbReference>
<dbReference type="SUPFAM" id="SSF100950">
    <property type="entry name" value="NagB/RpiA/CoA transferase-like"/>
    <property type="match status" value="1"/>
</dbReference>
<accession>Q69NG5</accession>
<accession>A3C0V2</accession>
<feature type="transit peptide" description="Chloroplast" evidence="2">
    <location>
        <begin position="1"/>
        <end position="63"/>
    </location>
</feature>
<feature type="chain" id="PRO_0000288680" description="Probable 6-phosphogluconolactonase 4, chloroplastic">
    <location>
        <begin position="64"/>
        <end position="324"/>
    </location>
</feature>
<feature type="region of interest" description="Disordered" evidence="3">
    <location>
        <begin position="19"/>
        <end position="43"/>
    </location>
</feature>
<comment type="function">
    <text evidence="1">Hydrolysis of 6-phosphogluconolactone to 6-phosphogluconate.</text>
</comment>
<comment type="catalytic activity">
    <reaction>
        <text>6-phospho-D-glucono-1,5-lactone + H2O = 6-phospho-D-gluconate + H(+)</text>
        <dbReference type="Rhea" id="RHEA:12556"/>
        <dbReference type="ChEBI" id="CHEBI:15377"/>
        <dbReference type="ChEBI" id="CHEBI:15378"/>
        <dbReference type="ChEBI" id="CHEBI:57955"/>
        <dbReference type="ChEBI" id="CHEBI:58759"/>
        <dbReference type="EC" id="3.1.1.31"/>
    </reaction>
</comment>
<comment type="pathway">
    <text>Carbohydrate degradation; pentose phosphate pathway; D-ribulose 5-phosphate from D-glucose 6-phosphate (oxidative stage): step 2/3.</text>
</comment>
<comment type="subcellular location">
    <subcellularLocation>
        <location evidence="4">Plastid</location>
        <location evidence="4">Chloroplast</location>
    </subcellularLocation>
</comment>
<comment type="similarity">
    <text evidence="4">Belongs to the glucosamine/galactosamine-6-phosphate isomerase family. 6-phosphogluconolactonase subfamily.</text>
</comment>
<comment type="sequence caution" evidence="4">
    <conflict type="erroneous initiation">
        <sequence resource="EMBL-CDS" id="BAD33762"/>
    </conflict>
</comment>
<comment type="sequence caution" evidence="4">
    <conflict type="erroneous initiation">
        <sequence resource="EMBL-CDS" id="BAF25655"/>
    </conflict>
</comment>
<protein>
    <recommendedName>
        <fullName>Probable 6-phosphogluconolactonase 4, chloroplastic</fullName>
        <shortName>6PGL 4</shortName>
        <ecNumber>3.1.1.31</ecNumber>
    </recommendedName>
</protein>
<evidence type="ECO:0000250" key="1"/>
<evidence type="ECO:0000255" key="2"/>
<evidence type="ECO:0000256" key="3">
    <source>
        <dbReference type="SAM" id="MobiDB-lite"/>
    </source>
</evidence>
<evidence type="ECO:0000305" key="4"/>